<proteinExistence type="evidence at protein level"/>
<keyword id="KW-0002">3D-structure</keyword>
<keyword id="KW-0963">Cytoplasm</keyword>
<keyword id="KW-0521">NADP</keyword>
<keyword id="KW-0560">Oxidoreductase</keyword>
<keyword id="KW-1185">Reference proteome</keyword>
<accession>Q5LS56</accession>
<gene>
    <name type="primary">acuI</name>
    <name type="ordered locus">SPO1914</name>
</gene>
<protein>
    <recommendedName>
        <fullName>Acrylyl-CoA reductase AcuI</fullName>
        <ecNumber>1.3.1.84</ecNumber>
    </recommendedName>
    <alternativeName>
        <fullName>Acryloyl-coenzyme A reductase</fullName>
    </alternativeName>
</protein>
<organism>
    <name type="scientific">Ruegeria pomeroyi (strain ATCC 700808 / DSM 15171 / DSS-3)</name>
    <name type="common">Silicibacter pomeroyi</name>
    <dbReference type="NCBI Taxonomy" id="246200"/>
    <lineage>
        <taxon>Bacteria</taxon>
        <taxon>Pseudomonadati</taxon>
        <taxon>Pseudomonadota</taxon>
        <taxon>Alphaproteobacteria</taxon>
        <taxon>Rhodobacterales</taxon>
        <taxon>Roseobacteraceae</taxon>
        <taxon>Ruegeria</taxon>
    </lineage>
</organism>
<evidence type="ECO:0000250" key="1"/>
<evidence type="ECO:0000269" key="2">
    <source>
    </source>
</evidence>
<evidence type="ECO:0000305" key="3"/>
<evidence type="ECO:0007829" key="4">
    <source>
        <dbReference type="PDB" id="5GXE"/>
    </source>
</evidence>
<comment type="function">
    <text evidence="2">Probably catalyzes the NADPH-dependent reduction of acrylyl-CoA to propanoyl-CoA. Restores acrylate resistance when expressed in an E.coli strain K12 acuI deletion.</text>
</comment>
<comment type="catalytic activity">
    <reaction>
        <text>propanoyl-CoA + NADP(+) = acryloyl-CoA + NADPH + H(+)</text>
        <dbReference type="Rhea" id="RHEA:26454"/>
        <dbReference type="ChEBI" id="CHEBI:15378"/>
        <dbReference type="ChEBI" id="CHEBI:57367"/>
        <dbReference type="ChEBI" id="CHEBI:57392"/>
        <dbReference type="ChEBI" id="CHEBI:57783"/>
        <dbReference type="ChEBI" id="CHEBI:58349"/>
        <dbReference type="EC" id="1.3.1.84"/>
    </reaction>
</comment>
<comment type="subunit">
    <text evidence="1">Homodimer.</text>
</comment>
<comment type="subcellular location">
    <subcellularLocation>
        <location evidence="3">Cytoplasm</location>
    </subcellularLocation>
</comment>
<comment type="induction">
    <text evidence="2">By dimethylsulfoniopropionate (DMSP) and acrylate.</text>
</comment>
<comment type="disruption phenotype">
    <text evidence="2">25-fold increased sensitivity to acrylate, growth is strongly inhibited by 20 mM dimethylsulfoniopropionate (DMSP).</text>
</comment>
<comment type="miscellaneous">
    <text>The zinc-binding residues of the alcohol dehydrogenase family are not conserved.</text>
</comment>
<comment type="similarity">
    <text evidence="3">Belongs to the zinc-containing alcohol dehydrogenase family. Acrylyl-CoA reductase subfamily.</text>
</comment>
<dbReference type="EC" id="1.3.1.84"/>
<dbReference type="EMBL" id="CP000031">
    <property type="protein sequence ID" value="AAV95191.1"/>
    <property type="molecule type" value="Genomic_DNA"/>
</dbReference>
<dbReference type="RefSeq" id="WP_011047645.1">
    <property type="nucleotide sequence ID" value="NC_003911.12"/>
</dbReference>
<dbReference type="PDB" id="5GXE">
    <property type="method" value="X-ray"/>
    <property type="resolution" value="1.70 A"/>
    <property type="chains" value="A/B=1-330"/>
</dbReference>
<dbReference type="PDB" id="5GXF">
    <property type="method" value="X-ray"/>
    <property type="resolution" value="2.29 A"/>
    <property type="chains" value="A/B=1-330"/>
</dbReference>
<dbReference type="PDBsum" id="5GXE"/>
<dbReference type="PDBsum" id="5GXF"/>
<dbReference type="SMR" id="Q5LS56"/>
<dbReference type="STRING" id="246200.SPO1914"/>
<dbReference type="PaxDb" id="246200-SPO1914"/>
<dbReference type="KEGG" id="sil:SPO1914"/>
<dbReference type="eggNOG" id="COG0604">
    <property type="taxonomic scope" value="Bacteria"/>
</dbReference>
<dbReference type="HOGENOM" id="CLU_026673_26_3_5"/>
<dbReference type="OrthoDB" id="9782155at2"/>
<dbReference type="BioCyc" id="MetaCyc:MONOMER-21335"/>
<dbReference type="BRENDA" id="1.3.1.84">
    <property type="organism ID" value="8123"/>
</dbReference>
<dbReference type="Proteomes" id="UP000001023">
    <property type="component" value="Chromosome"/>
</dbReference>
<dbReference type="GO" id="GO:0005737">
    <property type="term" value="C:cytoplasm"/>
    <property type="evidence" value="ECO:0007669"/>
    <property type="project" value="UniProtKB-SubCell"/>
</dbReference>
<dbReference type="GO" id="GO:0043957">
    <property type="term" value="F:acryloyl-CoA reductase (NADPH) activity"/>
    <property type="evidence" value="ECO:0007669"/>
    <property type="project" value="UniProtKB-EC"/>
</dbReference>
<dbReference type="CDD" id="cd08288">
    <property type="entry name" value="MDR_yhdh"/>
    <property type="match status" value="1"/>
</dbReference>
<dbReference type="Gene3D" id="3.90.180.10">
    <property type="entry name" value="Medium-chain alcohol dehydrogenases, catalytic domain"/>
    <property type="match status" value="1"/>
</dbReference>
<dbReference type="Gene3D" id="3.40.50.720">
    <property type="entry name" value="NAD(P)-binding Rossmann-like Domain"/>
    <property type="match status" value="1"/>
</dbReference>
<dbReference type="InterPro" id="IPR014188">
    <property type="entry name" value="Acrylyl-CoA_reductase_AcuI"/>
</dbReference>
<dbReference type="InterPro" id="IPR013149">
    <property type="entry name" value="ADH-like_C"/>
</dbReference>
<dbReference type="InterPro" id="IPR013154">
    <property type="entry name" value="ADH-like_N"/>
</dbReference>
<dbReference type="InterPro" id="IPR011032">
    <property type="entry name" value="GroES-like_sf"/>
</dbReference>
<dbReference type="InterPro" id="IPR036291">
    <property type="entry name" value="NAD(P)-bd_dom_sf"/>
</dbReference>
<dbReference type="InterPro" id="IPR020843">
    <property type="entry name" value="PKS_ER"/>
</dbReference>
<dbReference type="InterPro" id="IPR051397">
    <property type="entry name" value="Zn-ADH-like_protein"/>
</dbReference>
<dbReference type="NCBIfam" id="TIGR02823">
    <property type="entry name" value="oxido_YhdH"/>
    <property type="match status" value="1"/>
</dbReference>
<dbReference type="PANTHER" id="PTHR43677:SF1">
    <property type="entry name" value="ACRYLYL-COA REDUCTASE ACUI-RELATED"/>
    <property type="match status" value="1"/>
</dbReference>
<dbReference type="PANTHER" id="PTHR43677">
    <property type="entry name" value="SHORT-CHAIN DEHYDROGENASE/REDUCTASE"/>
    <property type="match status" value="1"/>
</dbReference>
<dbReference type="Pfam" id="PF08240">
    <property type="entry name" value="ADH_N"/>
    <property type="match status" value="1"/>
</dbReference>
<dbReference type="Pfam" id="PF00107">
    <property type="entry name" value="ADH_zinc_N"/>
    <property type="match status" value="1"/>
</dbReference>
<dbReference type="SMART" id="SM00829">
    <property type="entry name" value="PKS_ER"/>
    <property type="match status" value="1"/>
</dbReference>
<dbReference type="SUPFAM" id="SSF50129">
    <property type="entry name" value="GroES-like"/>
    <property type="match status" value="1"/>
</dbReference>
<dbReference type="SUPFAM" id="SSF51735">
    <property type="entry name" value="NAD(P)-binding Rossmann-fold domains"/>
    <property type="match status" value="1"/>
</dbReference>
<name>ACUI_RUEPO</name>
<feature type="chain" id="PRO_0000420615" description="Acrylyl-CoA reductase AcuI">
    <location>
        <begin position="1"/>
        <end position="330"/>
    </location>
</feature>
<feature type="binding site" evidence="1">
    <location>
        <position position="44"/>
    </location>
    <ligand>
        <name>NADP(+)</name>
        <dbReference type="ChEBI" id="CHEBI:58349"/>
    </ligand>
</feature>
<feature type="binding site" evidence="1">
    <location>
        <begin position="159"/>
        <end position="162"/>
    </location>
    <ligand>
        <name>NADP(+)</name>
        <dbReference type="ChEBI" id="CHEBI:58349"/>
    </ligand>
</feature>
<feature type="binding site" evidence="1">
    <location>
        <begin position="181"/>
        <end position="183"/>
    </location>
    <ligand>
        <name>NADP(+)</name>
        <dbReference type="ChEBI" id="CHEBI:58349"/>
    </ligand>
</feature>
<feature type="binding site" evidence="1">
    <location>
        <position position="201"/>
    </location>
    <ligand>
        <name>NADP(+)</name>
        <dbReference type="ChEBI" id="CHEBI:58349"/>
    </ligand>
</feature>
<feature type="binding site" evidence="1">
    <location>
        <position position="247"/>
    </location>
    <ligand>
        <name>NADP(+)</name>
        <dbReference type="ChEBI" id="CHEBI:58349"/>
    </ligand>
</feature>
<feature type="binding site" evidence="1">
    <location>
        <position position="272"/>
    </location>
    <ligand>
        <name>NADP(+)</name>
        <dbReference type="ChEBI" id="CHEBI:58349"/>
    </ligand>
</feature>
<feature type="strand" evidence="4">
    <location>
        <begin position="2"/>
        <end position="9"/>
    </location>
</feature>
<feature type="turn" evidence="4">
    <location>
        <begin position="11"/>
        <end position="13"/>
    </location>
</feature>
<feature type="strand" evidence="4">
    <location>
        <begin position="16"/>
        <end position="23"/>
    </location>
</feature>
<feature type="helix" evidence="4">
    <location>
        <begin position="25"/>
        <end position="27"/>
    </location>
</feature>
<feature type="strand" evidence="4">
    <location>
        <begin position="32"/>
        <end position="41"/>
    </location>
</feature>
<feature type="helix" evidence="4">
    <location>
        <begin position="44"/>
        <end position="50"/>
    </location>
</feature>
<feature type="strand" evidence="4">
    <location>
        <begin position="59"/>
        <end position="62"/>
    </location>
</feature>
<feature type="strand" evidence="4">
    <location>
        <begin position="66"/>
        <end position="77"/>
    </location>
</feature>
<feature type="strand" evidence="4">
    <location>
        <begin position="85"/>
        <end position="89"/>
    </location>
</feature>
<feature type="turn" evidence="4">
    <location>
        <begin position="91"/>
        <end position="95"/>
    </location>
</feature>
<feature type="strand" evidence="4">
    <location>
        <begin position="100"/>
        <end position="107"/>
    </location>
</feature>
<feature type="helix" evidence="4">
    <location>
        <begin position="109"/>
        <end position="111"/>
    </location>
</feature>
<feature type="strand" evidence="4">
    <location>
        <begin position="112"/>
        <end position="114"/>
    </location>
</feature>
<feature type="helix" evidence="4">
    <location>
        <begin position="121"/>
        <end position="143"/>
    </location>
</feature>
<feature type="strand" evidence="4">
    <location>
        <begin position="153"/>
        <end position="157"/>
    </location>
</feature>
<feature type="helix" evidence="4">
    <location>
        <begin position="161"/>
        <end position="172"/>
    </location>
</feature>
<feature type="strand" evidence="4">
    <location>
        <begin position="177"/>
        <end position="182"/>
    </location>
</feature>
<feature type="helix" evidence="4">
    <location>
        <begin position="184"/>
        <end position="186"/>
    </location>
</feature>
<feature type="helix" evidence="4">
    <location>
        <begin position="187"/>
        <end position="193"/>
    </location>
</feature>
<feature type="strand" evidence="4">
    <location>
        <begin position="196"/>
        <end position="200"/>
    </location>
</feature>
<feature type="helix" evidence="4">
    <location>
        <begin position="201"/>
        <end position="203"/>
    </location>
</feature>
<feature type="strand" evidence="4">
    <location>
        <begin position="217"/>
        <end position="223"/>
    </location>
</feature>
<feature type="helix" evidence="4">
    <location>
        <begin position="226"/>
        <end position="233"/>
    </location>
</feature>
<feature type="strand" evidence="4">
    <location>
        <begin position="241"/>
        <end position="244"/>
    </location>
</feature>
<feature type="strand" evidence="4">
    <location>
        <begin position="251"/>
        <end position="257"/>
    </location>
</feature>
<feature type="helix" evidence="4">
    <location>
        <begin position="258"/>
        <end position="263"/>
    </location>
</feature>
<feature type="strand" evidence="4">
    <location>
        <begin position="266"/>
        <end position="269"/>
    </location>
</feature>
<feature type="helix" evidence="4">
    <location>
        <begin position="277"/>
        <end position="290"/>
    </location>
</feature>
<feature type="helix" evidence="4">
    <location>
        <begin position="293"/>
        <end position="299"/>
    </location>
</feature>
<feature type="strand" evidence="4">
    <location>
        <begin position="300"/>
        <end position="303"/>
    </location>
</feature>
<feature type="helix" evidence="4">
    <location>
        <begin position="305"/>
        <end position="307"/>
    </location>
</feature>
<feature type="helix" evidence="4">
    <location>
        <begin position="308"/>
        <end position="316"/>
    </location>
</feature>
<feature type="strand" evidence="4">
    <location>
        <begin position="322"/>
        <end position="327"/>
    </location>
</feature>
<reference key="1">
    <citation type="journal article" date="2004" name="Nature">
        <title>Genome sequence of Silicibacter pomeroyi reveals adaptations to the marine environment.</title>
        <authorList>
            <person name="Moran M.A."/>
            <person name="Buchan A."/>
            <person name="Gonzalez J.M."/>
            <person name="Heidelberg J.F."/>
            <person name="Whitman W.B."/>
            <person name="Kiene R.P."/>
            <person name="Henriksen J.R."/>
            <person name="King G.M."/>
            <person name="Belas R."/>
            <person name="Fuqua C."/>
            <person name="Brinkac L.M."/>
            <person name="Lewis M."/>
            <person name="Johri S."/>
            <person name="Weaver B."/>
            <person name="Pai G."/>
            <person name="Eisen J.A."/>
            <person name="Rahe E."/>
            <person name="Sheldon W.M."/>
            <person name="Ye W."/>
            <person name="Miller T.R."/>
            <person name="Carlton J."/>
            <person name="Rasko D.A."/>
            <person name="Paulsen I.T."/>
            <person name="Ren Q."/>
            <person name="Daugherty S.C."/>
            <person name="DeBoy R.T."/>
            <person name="Dodson R.J."/>
            <person name="Durkin A.S."/>
            <person name="Madupu R."/>
            <person name="Nelson W.C."/>
            <person name="Sullivan S.A."/>
            <person name="Rosovitz M.J."/>
            <person name="Haft D.H."/>
            <person name="Selengut J."/>
            <person name="Ward N."/>
        </authorList>
    </citation>
    <scope>NUCLEOTIDE SEQUENCE [LARGE SCALE GENOMIC DNA]</scope>
    <source>
        <strain>ATCC 700808 / DSM 15171 / DSS-3</strain>
    </source>
</reference>
<reference key="2">
    <citation type="journal article" date="2014" name="Stand. Genomic Sci.">
        <title>An updated genome annotation for the model marine bacterium Ruegeria pomeroyi DSS-3.</title>
        <authorList>
            <person name="Rivers A.R."/>
            <person name="Smith C.B."/>
            <person name="Moran M.A."/>
        </authorList>
    </citation>
    <scope>GENOME REANNOTATION</scope>
    <source>
        <strain>ATCC 700808 / DSM 15171 / DSS-3</strain>
    </source>
</reference>
<reference key="3">
    <citation type="journal article" date="2012" name="PLoS ONE">
        <title>The Ruegeria pomeroyi acuI gene has a role in DMSP catabolism and resembles yhdH of E. coli and other bacteria in conferring resistance to acrylate.</title>
        <authorList>
            <person name="Todd J.D."/>
            <person name="Curson A.R."/>
            <person name="Sullivan M.J."/>
            <person name="Kirkwood M."/>
            <person name="Johnston A.W."/>
        </authorList>
    </citation>
    <scope>FUNCTION</scope>
    <scope>INDUCTION</scope>
    <scope>DISRUPTION PHENOTYPE</scope>
    <source>
        <strain>ATCC 700808 / DSM 15171 / DSS-3</strain>
    </source>
</reference>
<sequence length="330" mass="34450">MFNALVVDKDEESGKTQAAVKQLSLTDLPVGEVTVAVEYSTVNYKDGLCIGPGGGLVRKYPHVPGIDFAGTVENSSDERYKPGDKVVLTGWRVGEAHWGGYSQKANVRADWLVPLPEGLDTRQAMAVGTAGFTAMLAVMALEDHGLTPGHGPVLVTGAAGGVGSVATAILAHLGYEVAAVTGRPETADYLTSLGATQIVARDEINETVKRPLESEIWAGCVDAVGGAMLARVLGQMKYGASVAAVGLAGGAGLPATVIPFLLRGVNLLGIDSVMQPYANRLRAWERIARDLPMDKLEAMIRPATLSDLPGLGADILKGQVQGRVVVDVNA</sequence>